<gene>
    <name type="primary">erb1</name>
    <name type="ORF">AN1367</name>
</gene>
<protein>
    <recommendedName>
        <fullName evidence="1">Ribosome biogenesis protein erb1</fullName>
    </recommendedName>
    <alternativeName>
        <fullName evidence="1">Eukaryotic ribosome biogenesis protein 1</fullName>
    </alternativeName>
</protein>
<feature type="chain" id="PRO_0000370430" description="Ribosome biogenesis protein erb1">
    <location>
        <begin position="1"/>
        <end position="793"/>
    </location>
</feature>
<feature type="repeat" description="WD 1">
    <location>
        <begin position="431"/>
        <end position="470"/>
    </location>
</feature>
<feature type="repeat" description="WD 2">
    <location>
        <begin position="474"/>
        <end position="519"/>
    </location>
</feature>
<feature type="repeat" description="WD 3">
    <location>
        <begin position="616"/>
        <end position="654"/>
    </location>
</feature>
<feature type="repeat" description="WD 4">
    <location>
        <begin position="657"/>
        <end position="702"/>
    </location>
</feature>
<feature type="repeat" description="WD 5">
    <location>
        <begin position="706"/>
        <end position="747"/>
    </location>
</feature>
<feature type="repeat" description="WD 6">
    <location>
        <begin position="763"/>
        <end position="793"/>
    </location>
</feature>
<feature type="region of interest" description="Disordered" evidence="2">
    <location>
        <begin position="1"/>
        <end position="150"/>
    </location>
</feature>
<feature type="region of interest" description="Disordered" evidence="2">
    <location>
        <begin position="312"/>
        <end position="349"/>
    </location>
</feature>
<feature type="compositionally biased region" description="Basic residues" evidence="2">
    <location>
        <begin position="1"/>
        <end position="12"/>
    </location>
</feature>
<feature type="compositionally biased region" description="Basic and acidic residues" evidence="2">
    <location>
        <begin position="29"/>
        <end position="46"/>
    </location>
</feature>
<feature type="compositionally biased region" description="Acidic residues" evidence="2">
    <location>
        <begin position="47"/>
        <end position="85"/>
    </location>
</feature>
<feature type="compositionally biased region" description="Acidic residues" evidence="2">
    <location>
        <begin position="99"/>
        <end position="116"/>
    </location>
</feature>
<feature type="compositionally biased region" description="Basic and acidic residues" evidence="2">
    <location>
        <begin position="120"/>
        <end position="133"/>
    </location>
</feature>
<feature type="compositionally biased region" description="Acidic residues" evidence="2">
    <location>
        <begin position="136"/>
        <end position="149"/>
    </location>
</feature>
<feature type="compositionally biased region" description="Pro residues" evidence="2">
    <location>
        <begin position="323"/>
        <end position="340"/>
    </location>
</feature>
<name>ERB1_EMENI</name>
<reference key="1">
    <citation type="journal article" date="2005" name="Nature">
        <title>Sequencing of Aspergillus nidulans and comparative analysis with A. fumigatus and A. oryzae.</title>
        <authorList>
            <person name="Galagan J.E."/>
            <person name="Calvo S.E."/>
            <person name="Cuomo C."/>
            <person name="Ma L.-J."/>
            <person name="Wortman J.R."/>
            <person name="Batzoglou S."/>
            <person name="Lee S.-I."/>
            <person name="Bastuerkmen M."/>
            <person name="Spevak C.C."/>
            <person name="Clutterbuck J."/>
            <person name="Kapitonov V."/>
            <person name="Jurka J."/>
            <person name="Scazzocchio C."/>
            <person name="Farman M.L."/>
            <person name="Butler J."/>
            <person name="Purcell S."/>
            <person name="Harris S."/>
            <person name="Braus G.H."/>
            <person name="Draht O."/>
            <person name="Busch S."/>
            <person name="D'Enfert C."/>
            <person name="Bouchier C."/>
            <person name="Goldman G.H."/>
            <person name="Bell-Pedersen D."/>
            <person name="Griffiths-Jones S."/>
            <person name="Doonan J.H."/>
            <person name="Yu J."/>
            <person name="Vienken K."/>
            <person name="Pain A."/>
            <person name="Freitag M."/>
            <person name="Selker E.U."/>
            <person name="Archer D.B."/>
            <person name="Penalva M.A."/>
            <person name="Oakley B.R."/>
            <person name="Momany M."/>
            <person name="Tanaka T."/>
            <person name="Kumagai T."/>
            <person name="Asai K."/>
            <person name="Machida M."/>
            <person name="Nierman W.C."/>
            <person name="Denning D.W."/>
            <person name="Caddick M.X."/>
            <person name="Hynes M."/>
            <person name="Paoletti M."/>
            <person name="Fischer R."/>
            <person name="Miller B.L."/>
            <person name="Dyer P.S."/>
            <person name="Sachs M.S."/>
            <person name="Osmani S.A."/>
            <person name="Birren B.W."/>
        </authorList>
    </citation>
    <scope>NUCLEOTIDE SEQUENCE [LARGE SCALE GENOMIC DNA]</scope>
    <source>
        <strain>FGSC A4 / ATCC 38163 / CBS 112.46 / NRRL 194 / M139</strain>
    </source>
</reference>
<reference key="2">
    <citation type="journal article" date="2009" name="Fungal Genet. Biol.">
        <title>The 2008 update of the Aspergillus nidulans genome annotation: a community effort.</title>
        <authorList>
            <person name="Wortman J.R."/>
            <person name="Gilsenan J.M."/>
            <person name="Joardar V."/>
            <person name="Deegan J."/>
            <person name="Clutterbuck J."/>
            <person name="Andersen M.R."/>
            <person name="Archer D."/>
            <person name="Bencina M."/>
            <person name="Braus G."/>
            <person name="Coutinho P."/>
            <person name="von Dohren H."/>
            <person name="Doonan J."/>
            <person name="Driessen A.J."/>
            <person name="Durek P."/>
            <person name="Espeso E."/>
            <person name="Fekete E."/>
            <person name="Flipphi M."/>
            <person name="Estrada C.G."/>
            <person name="Geysens S."/>
            <person name="Goldman G."/>
            <person name="de Groot P.W."/>
            <person name="Hansen K."/>
            <person name="Harris S.D."/>
            <person name="Heinekamp T."/>
            <person name="Helmstaedt K."/>
            <person name="Henrissat B."/>
            <person name="Hofmann G."/>
            <person name="Homan T."/>
            <person name="Horio T."/>
            <person name="Horiuchi H."/>
            <person name="James S."/>
            <person name="Jones M."/>
            <person name="Karaffa L."/>
            <person name="Karanyi Z."/>
            <person name="Kato M."/>
            <person name="Keller N."/>
            <person name="Kelly D.E."/>
            <person name="Kiel J.A."/>
            <person name="Kim J.M."/>
            <person name="van der Klei I.J."/>
            <person name="Klis F.M."/>
            <person name="Kovalchuk A."/>
            <person name="Krasevec N."/>
            <person name="Kubicek C.P."/>
            <person name="Liu B."/>
            <person name="Maccabe A."/>
            <person name="Meyer V."/>
            <person name="Mirabito P."/>
            <person name="Miskei M."/>
            <person name="Mos M."/>
            <person name="Mullins J."/>
            <person name="Nelson D.R."/>
            <person name="Nielsen J."/>
            <person name="Oakley B.R."/>
            <person name="Osmani S.A."/>
            <person name="Pakula T."/>
            <person name="Paszewski A."/>
            <person name="Paulsen I."/>
            <person name="Pilsyk S."/>
            <person name="Pocsi I."/>
            <person name="Punt P.J."/>
            <person name="Ram A.F."/>
            <person name="Ren Q."/>
            <person name="Robellet X."/>
            <person name="Robson G."/>
            <person name="Seiboth B."/>
            <person name="van Solingen P."/>
            <person name="Specht T."/>
            <person name="Sun J."/>
            <person name="Taheri-Talesh N."/>
            <person name="Takeshita N."/>
            <person name="Ussery D."/>
            <person name="vanKuyk P.A."/>
            <person name="Visser H."/>
            <person name="van de Vondervoort P.J."/>
            <person name="de Vries R.P."/>
            <person name="Walton J."/>
            <person name="Xiang X."/>
            <person name="Xiong Y."/>
            <person name="Zeng A.P."/>
            <person name="Brandt B.W."/>
            <person name="Cornell M.J."/>
            <person name="van den Hondel C.A."/>
            <person name="Visser J."/>
            <person name="Oliver S.G."/>
            <person name="Turner G."/>
        </authorList>
    </citation>
    <scope>GENOME REANNOTATION</scope>
    <source>
        <strain>FGSC A4 / ATCC 38163 / CBS 112.46 / NRRL 194 / M139</strain>
    </source>
</reference>
<organism>
    <name type="scientific">Emericella nidulans (strain FGSC A4 / ATCC 38163 / CBS 112.46 / NRRL 194 / M139)</name>
    <name type="common">Aspergillus nidulans</name>
    <dbReference type="NCBI Taxonomy" id="227321"/>
    <lineage>
        <taxon>Eukaryota</taxon>
        <taxon>Fungi</taxon>
        <taxon>Dikarya</taxon>
        <taxon>Ascomycota</taxon>
        <taxon>Pezizomycotina</taxon>
        <taxon>Eurotiomycetes</taxon>
        <taxon>Eurotiomycetidae</taxon>
        <taxon>Eurotiales</taxon>
        <taxon>Aspergillaceae</taxon>
        <taxon>Aspergillus</taxon>
        <taxon>Aspergillus subgen. Nidulantes</taxon>
    </lineage>
</organism>
<comment type="function">
    <text evidence="1">Component of the NOP7 complex, which is required for maturation of the 25S and 5.8S ribosomal RNAs and formation of the 60S ribosome.</text>
</comment>
<comment type="subunit">
    <text evidence="1">Component of the NOP7 complex, composed of erb1, nop7 and ytm1. The complex is held together by erb1, which interacts with nop7 via its N-terminal domain and with ytm1 via a high-affinity interaction between the seven-bladed beta-propeller domains of the 2 proteins. The NOP7 complex associates with the 66S pre-ribosome.</text>
</comment>
<comment type="subcellular location">
    <subcellularLocation>
        <location evidence="1">Nucleus</location>
        <location evidence="1">Nucleolus</location>
    </subcellularLocation>
    <subcellularLocation>
        <location evidence="1">Nucleus</location>
        <location evidence="1">Nucleoplasm</location>
    </subcellularLocation>
</comment>
<comment type="similarity">
    <text evidence="1">Belongs to the WD repeat BOP1/ERB1 family.</text>
</comment>
<comment type="sequence caution" evidence="3">
    <conflict type="erroneous initiation">
        <sequence resource="EMBL-CDS" id="CBF87637"/>
    </conflict>
    <text>Extended N-terminus.</text>
</comment>
<comment type="sequence caution" evidence="3">
    <conflict type="erroneous initiation">
        <sequence resource="EMBL-CDS" id="EAA65550"/>
    </conflict>
    <text>Extended N-terminus.</text>
</comment>
<sequence>MAALKASKKRKAVTRDVEEEAGVFSGDELSSKDLDGALSDNAHDLLSDEDASDSEIELIDDYSSSEEEDDEELDSDEIPSEGEDEGVVKKKSTAVLDLDGLEDREESTKEEEEEEQLNYRIEKDANGNDRYVYDEINPDDNSDYSDVDENSNTIGNIPLSFYDQYPHIGYDINGKKILRPAKGEALDALLDSIEIPKGWTGLTDPSTGKPLELSQDELELLRKVQMNEIPDEEYNPYEPLTEWFTTEKEIMPLSAAPEPKRRFVPSKHEAKRVMKIVKAIREGRILPFKPQTQEDEEDKDVIKYDLWADEAERPDHPMHVPAPKLPPPGYEESYHPPPEYLPDKKERKAWEDADPEDREREFLPQDFGSLRRVPGYENFVKEKFERCLDLYLAPRVRRSKLNIDPESLLPKLPSPEELKPFPTACAAVFRGHKGRVRSLAVDPTGIWLATGGDDGTVRVWELITGRQLWSVKLGEDEPVNVVRWRPGKDAVILAAAAGDDIFLAVPPIADPETEKASLDLLDAGWGYAASKPAPKPADEEKKSTPPQWIRPSAALADSGVCVVIPLRYIAKTISWHRRGDYFVTVCSGASTPASVAIAIHTVSKHLTQYPFRRRIKGGGPPQTAHFHPSKPILFVANQRTIRAYDLSRQLLVKIVQPGARWISSFDIHPTSATAAGGDNLIVGSYDRRLLWHDLELSQRPYKTLRYHRKAIRAVKFHPGGRYPLFADASDDGSLQIFHGNVTGDMLSNATIVPLKVLRGHKITGELGVLDIDWHPREAWCVSAGADGTCRLWM</sequence>
<dbReference type="EMBL" id="AACD01000018">
    <property type="protein sequence ID" value="EAA65550.1"/>
    <property type="status" value="ALT_INIT"/>
    <property type="molecule type" value="Genomic_DNA"/>
</dbReference>
<dbReference type="EMBL" id="BN001308">
    <property type="protein sequence ID" value="CBF87637.1"/>
    <property type="status" value="ALT_INIT"/>
    <property type="molecule type" value="Genomic_DNA"/>
</dbReference>
<dbReference type="RefSeq" id="XP_658971.1">
    <property type="nucleotide sequence ID" value="XM_653879.1"/>
</dbReference>
<dbReference type="SMR" id="Q5BDL3"/>
<dbReference type="FunCoup" id="Q5BDL3">
    <property type="interactions" value="989"/>
</dbReference>
<dbReference type="STRING" id="227321.Q5BDL3"/>
<dbReference type="KEGG" id="ani:ANIA_01367"/>
<dbReference type="eggNOG" id="KOG0650">
    <property type="taxonomic scope" value="Eukaryota"/>
</dbReference>
<dbReference type="HOGENOM" id="CLU_011390_0_1_1"/>
<dbReference type="InParanoid" id="Q5BDL3"/>
<dbReference type="OrthoDB" id="5571054at2759"/>
<dbReference type="Proteomes" id="UP000000560">
    <property type="component" value="Chromosome VIII"/>
</dbReference>
<dbReference type="GO" id="GO:0005654">
    <property type="term" value="C:nucleoplasm"/>
    <property type="evidence" value="ECO:0007669"/>
    <property type="project" value="UniProtKB-SubCell"/>
</dbReference>
<dbReference type="GO" id="GO:0070545">
    <property type="term" value="C:PeBoW complex"/>
    <property type="evidence" value="ECO:0000318"/>
    <property type="project" value="GO_Central"/>
</dbReference>
<dbReference type="GO" id="GO:0030687">
    <property type="term" value="C:preribosome, large subunit precursor"/>
    <property type="evidence" value="ECO:0000318"/>
    <property type="project" value="GO_Central"/>
</dbReference>
<dbReference type="GO" id="GO:0043021">
    <property type="term" value="F:ribonucleoprotein complex binding"/>
    <property type="evidence" value="ECO:0000318"/>
    <property type="project" value="GO_Central"/>
</dbReference>
<dbReference type="GO" id="GO:0000466">
    <property type="term" value="P:maturation of 5.8S rRNA from tricistronic rRNA transcript (SSU-rRNA, 5.8S rRNA, LSU-rRNA)"/>
    <property type="evidence" value="ECO:0007669"/>
    <property type="project" value="UniProtKB-UniRule"/>
</dbReference>
<dbReference type="GO" id="GO:0000463">
    <property type="term" value="P:maturation of LSU-rRNA from tricistronic rRNA transcript (SSU-rRNA, 5.8S rRNA, LSU-rRNA)"/>
    <property type="evidence" value="ECO:0000318"/>
    <property type="project" value="GO_Central"/>
</dbReference>
<dbReference type="FunFam" id="2.130.10.10:FF:000061">
    <property type="entry name" value="Ribosome biogenesis protein BOP1 homolog"/>
    <property type="match status" value="1"/>
</dbReference>
<dbReference type="Gene3D" id="2.130.10.10">
    <property type="entry name" value="YVTN repeat-like/Quinoprotein amine dehydrogenase"/>
    <property type="match status" value="1"/>
</dbReference>
<dbReference type="HAMAP" id="MF_03027">
    <property type="entry name" value="BOP1"/>
    <property type="match status" value="1"/>
</dbReference>
<dbReference type="InterPro" id="IPR028598">
    <property type="entry name" value="BOP1/Erb1"/>
</dbReference>
<dbReference type="InterPro" id="IPR012953">
    <property type="entry name" value="BOP1_N_dom"/>
</dbReference>
<dbReference type="InterPro" id="IPR015943">
    <property type="entry name" value="WD40/YVTN_repeat-like_dom_sf"/>
</dbReference>
<dbReference type="InterPro" id="IPR019775">
    <property type="entry name" value="WD40_repeat_CS"/>
</dbReference>
<dbReference type="InterPro" id="IPR036322">
    <property type="entry name" value="WD40_repeat_dom_sf"/>
</dbReference>
<dbReference type="InterPro" id="IPR001680">
    <property type="entry name" value="WD40_rpt"/>
</dbReference>
<dbReference type="PANTHER" id="PTHR17605:SF0">
    <property type="entry name" value="RIBOSOME BIOGENESIS PROTEIN BOP1"/>
    <property type="match status" value="1"/>
</dbReference>
<dbReference type="PANTHER" id="PTHR17605">
    <property type="entry name" value="RIBOSOME BIOGENESIS PROTEIN BOP1 BLOCK OF PROLIFERATION 1 PROTEIN"/>
    <property type="match status" value="1"/>
</dbReference>
<dbReference type="Pfam" id="PF08145">
    <property type="entry name" value="BOP1NT"/>
    <property type="match status" value="1"/>
</dbReference>
<dbReference type="Pfam" id="PF00400">
    <property type="entry name" value="WD40"/>
    <property type="match status" value="3"/>
</dbReference>
<dbReference type="SMART" id="SM01035">
    <property type="entry name" value="BOP1NT"/>
    <property type="match status" value="1"/>
</dbReference>
<dbReference type="SMART" id="SM00320">
    <property type="entry name" value="WD40"/>
    <property type="match status" value="4"/>
</dbReference>
<dbReference type="SUPFAM" id="SSF50978">
    <property type="entry name" value="WD40 repeat-like"/>
    <property type="match status" value="1"/>
</dbReference>
<dbReference type="PROSITE" id="PS00678">
    <property type="entry name" value="WD_REPEATS_1"/>
    <property type="match status" value="1"/>
</dbReference>
<dbReference type="PROSITE" id="PS50082">
    <property type="entry name" value="WD_REPEATS_2"/>
    <property type="match status" value="2"/>
</dbReference>
<dbReference type="PROSITE" id="PS50294">
    <property type="entry name" value="WD_REPEATS_REGION"/>
    <property type="match status" value="1"/>
</dbReference>
<evidence type="ECO:0000255" key="1">
    <source>
        <dbReference type="HAMAP-Rule" id="MF_03027"/>
    </source>
</evidence>
<evidence type="ECO:0000256" key="2">
    <source>
        <dbReference type="SAM" id="MobiDB-lite"/>
    </source>
</evidence>
<evidence type="ECO:0000305" key="3"/>
<proteinExistence type="inferred from homology"/>
<accession>Q5BDL3</accession>
<accession>C8VRW2</accession>
<keyword id="KW-0539">Nucleus</keyword>
<keyword id="KW-1185">Reference proteome</keyword>
<keyword id="KW-0677">Repeat</keyword>
<keyword id="KW-0690">Ribosome biogenesis</keyword>
<keyword id="KW-0698">rRNA processing</keyword>
<keyword id="KW-0853">WD repeat</keyword>